<protein>
    <recommendedName>
        <fullName evidence="1">Chorismate synthase</fullName>
        <shortName evidence="1">CS</shortName>
        <ecNumber evidence="1">4.2.3.5</ecNumber>
    </recommendedName>
    <alternativeName>
        <fullName evidence="1">5-enolpyruvylshikimate-3-phosphate phospholyase</fullName>
    </alternativeName>
</protein>
<name>AROC_PSECP</name>
<accession>B8H8V7</accession>
<comment type="function">
    <text evidence="1">Catalyzes the anti-1,4-elimination of the C-3 phosphate and the C-6 proR hydrogen from 5-enolpyruvylshikimate-3-phosphate (EPSP) to yield chorismate, which is the branch point compound that serves as the starting substrate for the three terminal pathways of aromatic amino acid biosynthesis. This reaction introduces a second double bond into the aromatic ring system.</text>
</comment>
<comment type="catalytic activity">
    <reaction evidence="1">
        <text>5-O-(1-carboxyvinyl)-3-phosphoshikimate = chorismate + phosphate</text>
        <dbReference type="Rhea" id="RHEA:21020"/>
        <dbReference type="ChEBI" id="CHEBI:29748"/>
        <dbReference type="ChEBI" id="CHEBI:43474"/>
        <dbReference type="ChEBI" id="CHEBI:57701"/>
        <dbReference type="EC" id="4.2.3.5"/>
    </reaction>
</comment>
<comment type="cofactor">
    <cofactor evidence="1">
        <name>FMNH2</name>
        <dbReference type="ChEBI" id="CHEBI:57618"/>
    </cofactor>
    <text evidence="1">Reduced FMN (FMNH(2)).</text>
</comment>
<comment type="pathway">
    <text evidence="1">Metabolic intermediate biosynthesis; chorismate biosynthesis; chorismate from D-erythrose 4-phosphate and phosphoenolpyruvate: step 7/7.</text>
</comment>
<comment type="subunit">
    <text evidence="1">Homotetramer.</text>
</comment>
<comment type="similarity">
    <text evidence="1">Belongs to the chorismate synthase family.</text>
</comment>
<reference key="1">
    <citation type="submission" date="2009-01" db="EMBL/GenBank/DDBJ databases">
        <title>Complete sequence of chromosome of Arthrobacter chlorophenolicus A6.</title>
        <authorList>
            <consortium name="US DOE Joint Genome Institute"/>
            <person name="Lucas S."/>
            <person name="Copeland A."/>
            <person name="Lapidus A."/>
            <person name="Glavina del Rio T."/>
            <person name="Tice H."/>
            <person name="Bruce D."/>
            <person name="Goodwin L."/>
            <person name="Pitluck S."/>
            <person name="Goltsman E."/>
            <person name="Clum A."/>
            <person name="Larimer F."/>
            <person name="Land M."/>
            <person name="Hauser L."/>
            <person name="Kyrpides N."/>
            <person name="Mikhailova N."/>
            <person name="Jansson J."/>
            <person name="Richardson P."/>
        </authorList>
    </citation>
    <scope>NUCLEOTIDE SEQUENCE [LARGE SCALE GENOMIC DNA]</scope>
    <source>
        <strain>ATCC 700700 / DSM 12829 / CIP 107037 / JCM 12360 / KCTC 9906 / NCIMB 13794 / A6</strain>
    </source>
</reference>
<sequence>MLRWLTAGESHGPALMGIIEGVPAGVEITSGHIADSLARRRLGYGRGARMKFEQDVVTILGGVRHGVTQGGPVAVQVGNTEWPKWEQIMAPDPVDPELLADQARNAPLTRPRPGHADFTGMQKYGFDEARPVLERASARETATRVAMGTVAAQFLKHLGIELVSHTVSIASVSVPDGRPLPEPADVIALDADPLRCFDRETSDAMVAEVDAAHKEGETLGGVVEVLAYGLPPGLGSYVHWDRRLDSRLAAALMGIQAIKGVEVGDGFRTAARRGSAAHDEIVRDEDGRIVRASNRAGGIEGGMSIGDVLRVRAAMKPIATVPRALKTIDVSTGEPAKAHHQRSDVCAVPAAGVVAEAMVALVLAEAVTEKFGGDSVAETARNIKGYLDNIPASLDSIGQ</sequence>
<feature type="chain" id="PRO_1000132753" description="Chorismate synthase">
    <location>
        <begin position="1"/>
        <end position="399"/>
    </location>
</feature>
<feature type="binding site" evidence="1">
    <location>
        <position position="40"/>
    </location>
    <ligand>
        <name>NADP(+)</name>
        <dbReference type="ChEBI" id="CHEBI:58349"/>
    </ligand>
</feature>
<feature type="binding site" evidence="1">
    <location>
        <position position="46"/>
    </location>
    <ligand>
        <name>NADP(+)</name>
        <dbReference type="ChEBI" id="CHEBI:58349"/>
    </ligand>
</feature>
<feature type="binding site" evidence="1">
    <location>
        <begin position="135"/>
        <end position="137"/>
    </location>
    <ligand>
        <name>FMN</name>
        <dbReference type="ChEBI" id="CHEBI:58210"/>
    </ligand>
</feature>
<feature type="binding site" evidence="1">
    <location>
        <begin position="256"/>
        <end position="257"/>
    </location>
    <ligand>
        <name>FMN</name>
        <dbReference type="ChEBI" id="CHEBI:58210"/>
    </ligand>
</feature>
<feature type="binding site" evidence="1">
    <location>
        <position position="301"/>
    </location>
    <ligand>
        <name>FMN</name>
        <dbReference type="ChEBI" id="CHEBI:58210"/>
    </ligand>
</feature>
<feature type="binding site" evidence="1">
    <location>
        <begin position="316"/>
        <end position="320"/>
    </location>
    <ligand>
        <name>FMN</name>
        <dbReference type="ChEBI" id="CHEBI:58210"/>
    </ligand>
</feature>
<feature type="binding site" evidence="1">
    <location>
        <position position="342"/>
    </location>
    <ligand>
        <name>FMN</name>
        <dbReference type="ChEBI" id="CHEBI:58210"/>
    </ligand>
</feature>
<proteinExistence type="inferred from homology"/>
<gene>
    <name evidence="1" type="primary">aroC</name>
    <name type="ordered locus">Achl_2011</name>
</gene>
<keyword id="KW-0028">Amino-acid biosynthesis</keyword>
<keyword id="KW-0057">Aromatic amino acid biosynthesis</keyword>
<keyword id="KW-0274">FAD</keyword>
<keyword id="KW-0285">Flavoprotein</keyword>
<keyword id="KW-0288">FMN</keyword>
<keyword id="KW-0456">Lyase</keyword>
<keyword id="KW-0521">NADP</keyword>
<evidence type="ECO:0000255" key="1">
    <source>
        <dbReference type="HAMAP-Rule" id="MF_00300"/>
    </source>
</evidence>
<organism>
    <name type="scientific">Pseudarthrobacter chlorophenolicus (strain ATCC 700700 / DSM 12829 / CIP 107037 / JCM 12360 / KCTC 9906 / NCIMB 13794 / A6)</name>
    <name type="common">Arthrobacter chlorophenolicus</name>
    <dbReference type="NCBI Taxonomy" id="452863"/>
    <lineage>
        <taxon>Bacteria</taxon>
        <taxon>Bacillati</taxon>
        <taxon>Actinomycetota</taxon>
        <taxon>Actinomycetes</taxon>
        <taxon>Micrococcales</taxon>
        <taxon>Micrococcaceae</taxon>
        <taxon>Pseudarthrobacter</taxon>
    </lineage>
</organism>
<dbReference type="EC" id="4.2.3.5" evidence="1"/>
<dbReference type="EMBL" id="CP001341">
    <property type="protein sequence ID" value="ACL39985.1"/>
    <property type="molecule type" value="Genomic_DNA"/>
</dbReference>
<dbReference type="RefSeq" id="WP_015937203.1">
    <property type="nucleotide sequence ID" value="NC_011886.1"/>
</dbReference>
<dbReference type="SMR" id="B8H8V7"/>
<dbReference type="STRING" id="452863.Achl_2011"/>
<dbReference type="KEGG" id="ach:Achl_2011"/>
<dbReference type="eggNOG" id="COG0082">
    <property type="taxonomic scope" value="Bacteria"/>
</dbReference>
<dbReference type="HOGENOM" id="CLU_034547_2_0_11"/>
<dbReference type="OrthoDB" id="9771806at2"/>
<dbReference type="UniPathway" id="UPA00053">
    <property type="reaction ID" value="UER00090"/>
</dbReference>
<dbReference type="Proteomes" id="UP000002505">
    <property type="component" value="Chromosome"/>
</dbReference>
<dbReference type="GO" id="GO:0005829">
    <property type="term" value="C:cytosol"/>
    <property type="evidence" value="ECO:0007669"/>
    <property type="project" value="TreeGrafter"/>
</dbReference>
<dbReference type="GO" id="GO:0004107">
    <property type="term" value="F:chorismate synthase activity"/>
    <property type="evidence" value="ECO:0007669"/>
    <property type="project" value="UniProtKB-UniRule"/>
</dbReference>
<dbReference type="GO" id="GO:0010181">
    <property type="term" value="F:FMN binding"/>
    <property type="evidence" value="ECO:0007669"/>
    <property type="project" value="TreeGrafter"/>
</dbReference>
<dbReference type="GO" id="GO:0008652">
    <property type="term" value="P:amino acid biosynthetic process"/>
    <property type="evidence" value="ECO:0007669"/>
    <property type="project" value="UniProtKB-KW"/>
</dbReference>
<dbReference type="GO" id="GO:0009073">
    <property type="term" value="P:aromatic amino acid family biosynthetic process"/>
    <property type="evidence" value="ECO:0007669"/>
    <property type="project" value="UniProtKB-KW"/>
</dbReference>
<dbReference type="GO" id="GO:0009423">
    <property type="term" value="P:chorismate biosynthetic process"/>
    <property type="evidence" value="ECO:0007669"/>
    <property type="project" value="UniProtKB-UniRule"/>
</dbReference>
<dbReference type="CDD" id="cd07304">
    <property type="entry name" value="Chorismate_synthase"/>
    <property type="match status" value="1"/>
</dbReference>
<dbReference type="FunFam" id="3.60.150.10:FF:000002">
    <property type="entry name" value="Chorismate synthase"/>
    <property type="match status" value="1"/>
</dbReference>
<dbReference type="Gene3D" id="3.60.150.10">
    <property type="entry name" value="Chorismate synthase AroC"/>
    <property type="match status" value="1"/>
</dbReference>
<dbReference type="HAMAP" id="MF_00300">
    <property type="entry name" value="Chorismate_synth"/>
    <property type="match status" value="1"/>
</dbReference>
<dbReference type="InterPro" id="IPR000453">
    <property type="entry name" value="Chorismate_synth"/>
</dbReference>
<dbReference type="InterPro" id="IPR035904">
    <property type="entry name" value="Chorismate_synth_AroC_sf"/>
</dbReference>
<dbReference type="InterPro" id="IPR020541">
    <property type="entry name" value="Chorismate_synthase_CS"/>
</dbReference>
<dbReference type="NCBIfam" id="TIGR00033">
    <property type="entry name" value="aroC"/>
    <property type="match status" value="1"/>
</dbReference>
<dbReference type="NCBIfam" id="NF003793">
    <property type="entry name" value="PRK05382.1"/>
    <property type="match status" value="1"/>
</dbReference>
<dbReference type="PANTHER" id="PTHR21085">
    <property type="entry name" value="CHORISMATE SYNTHASE"/>
    <property type="match status" value="1"/>
</dbReference>
<dbReference type="PANTHER" id="PTHR21085:SF0">
    <property type="entry name" value="CHORISMATE SYNTHASE"/>
    <property type="match status" value="1"/>
</dbReference>
<dbReference type="Pfam" id="PF01264">
    <property type="entry name" value="Chorismate_synt"/>
    <property type="match status" value="1"/>
</dbReference>
<dbReference type="PIRSF" id="PIRSF001456">
    <property type="entry name" value="Chorismate_synth"/>
    <property type="match status" value="1"/>
</dbReference>
<dbReference type="SUPFAM" id="SSF103263">
    <property type="entry name" value="Chorismate synthase, AroC"/>
    <property type="match status" value="1"/>
</dbReference>
<dbReference type="PROSITE" id="PS00787">
    <property type="entry name" value="CHORISMATE_SYNTHASE_1"/>
    <property type="match status" value="1"/>
</dbReference>
<dbReference type="PROSITE" id="PS00788">
    <property type="entry name" value="CHORISMATE_SYNTHASE_2"/>
    <property type="match status" value="1"/>
</dbReference>
<dbReference type="PROSITE" id="PS00789">
    <property type="entry name" value="CHORISMATE_SYNTHASE_3"/>
    <property type="match status" value="1"/>
</dbReference>